<organism>
    <name type="scientific">Chlorobaculum tepidum (strain ATCC 49652 / DSM 12025 / NBRC 103806 / TLS)</name>
    <name type="common">Chlorobium tepidum</name>
    <dbReference type="NCBI Taxonomy" id="194439"/>
    <lineage>
        <taxon>Bacteria</taxon>
        <taxon>Pseudomonadati</taxon>
        <taxon>Chlorobiota</taxon>
        <taxon>Chlorobiia</taxon>
        <taxon>Chlorobiales</taxon>
        <taxon>Chlorobiaceae</taxon>
        <taxon>Chlorobaculum</taxon>
    </lineage>
</organism>
<sequence>MNFDQKGLKKRSITVAYFFEHIQKRFDIKFRRLNELDEQKCRIHERDLHRPGLAIAGFTKLFTYKRVQILGNTETRYLNHLSDEERKTAFANFVSFRMPCIILTSNNKLDQELVDMATGAGIPVFITRCSSTKTIYYITDFLDEEFSLYQQYHGSMIDVYGVGVLLTGKSGLGKSEVALDLIERGHGLVADDVVVVKRKGETKTLVASRNNIIDHFMEIRGLGVVDVRQNFGIRAIRDRKEVQVVVELLEWSKESEYERLGLDQKMVKLLGVDLPLVQLPIFPGKNITAIIEVVALNFLLKHYAGYVPAEALTERIRNVINKERAKAPAPSTSFEEYNDEND</sequence>
<name>HPRK_CHLTE</name>
<gene>
    <name evidence="1" type="primary">hprK</name>
    <name type="synonym">ptsK</name>
    <name type="ordered locus">CT1633</name>
</gene>
<evidence type="ECO:0000255" key="1">
    <source>
        <dbReference type="HAMAP-Rule" id="MF_01249"/>
    </source>
</evidence>
<accession>Q8KBZ7</accession>
<keyword id="KW-0067">ATP-binding</keyword>
<keyword id="KW-0418">Kinase</keyword>
<keyword id="KW-0460">Magnesium</keyword>
<keyword id="KW-0479">Metal-binding</keyword>
<keyword id="KW-0511">Multifunctional enzyme</keyword>
<keyword id="KW-0547">Nucleotide-binding</keyword>
<keyword id="KW-1185">Reference proteome</keyword>
<keyword id="KW-0723">Serine/threonine-protein kinase</keyword>
<keyword id="KW-0808">Transferase</keyword>
<proteinExistence type="inferred from homology"/>
<comment type="function">
    <text evidence="1">Catalyzes the ATP- as well as the pyrophosphate-dependent phosphorylation of a specific serine residue in HPr, a phosphocarrier protein of the phosphoenolpyruvate-dependent sugar phosphotransferase system (PTS). HprK/P also catalyzes the pyrophosphate-producing, inorganic phosphate-dependent dephosphorylation (phosphorolysis) of seryl-phosphorylated HPr (P-Ser-HPr).</text>
</comment>
<comment type="catalytic activity">
    <reaction evidence="1">
        <text>[HPr protein]-L-serine + ATP = [HPr protein]-O-phospho-L-serine + ADP + H(+)</text>
        <dbReference type="Rhea" id="RHEA:46600"/>
        <dbReference type="Rhea" id="RHEA-COMP:11602"/>
        <dbReference type="Rhea" id="RHEA-COMP:11603"/>
        <dbReference type="ChEBI" id="CHEBI:15378"/>
        <dbReference type="ChEBI" id="CHEBI:29999"/>
        <dbReference type="ChEBI" id="CHEBI:30616"/>
        <dbReference type="ChEBI" id="CHEBI:83421"/>
        <dbReference type="ChEBI" id="CHEBI:456216"/>
    </reaction>
</comment>
<comment type="catalytic activity">
    <reaction evidence="1">
        <text>[HPr protein]-O-phospho-L-serine + phosphate + H(+) = [HPr protein]-L-serine + diphosphate</text>
        <dbReference type="Rhea" id="RHEA:46604"/>
        <dbReference type="Rhea" id="RHEA-COMP:11602"/>
        <dbReference type="Rhea" id="RHEA-COMP:11603"/>
        <dbReference type="ChEBI" id="CHEBI:15378"/>
        <dbReference type="ChEBI" id="CHEBI:29999"/>
        <dbReference type="ChEBI" id="CHEBI:33019"/>
        <dbReference type="ChEBI" id="CHEBI:43474"/>
        <dbReference type="ChEBI" id="CHEBI:83421"/>
    </reaction>
</comment>
<comment type="cofactor">
    <cofactor evidence="1">
        <name>Mg(2+)</name>
        <dbReference type="ChEBI" id="CHEBI:18420"/>
    </cofactor>
</comment>
<comment type="subunit">
    <text evidence="1">Homohexamer.</text>
</comment>
<comment type="domain">
    <text evidence="1">The Walker A ATP-binding motif also binds Pi and PPi.</text>
</comment>
<comment type="miscellaneous">
    <text evidence="1">Both phosphorylation and phosphorolysis are carried out by the same active site and suggest a common mechanism for both reactions.</text>
</comment>
<comment type="similarity">
    <text evidence="1">Belongs to the HPrK/P family.</text>
</comment>
<protein>
    <recommendedName>
        <fullName evidence="1">HPr kinase/phosphorylase</fullName>
        <shortName evidence="1">HPrK/P</shortName>
        <ecNumber evidence="1">2.7.11.-</ecNumber>
        <ecNumber evidence="1">2.7.4.-</ecNumber>
    </recommendedName>
    <alternativeName>
        <fullName evidence="1">HPr(Ser) kinase/phosphorylase</fullName>
    </alternativeName>
</protein>
<dbReference type="EC" id="2.7.11.-" evidence="1"/>
<dbReference type="EC" id="2.7.4.-" evidence="1"/>
<dbReference type="EMBL" id="AE006470">
    <property type="protein sequence ID" value="AAM72858.1"/>
    <property type="molecule type" value="Genomic_DNA"/>
</dbReference>
<dbReference type="RefSeq" id="NP_662516.1">
    <property type="nucleotide sequence ID" value="NC_002932.3"/>
</dbReference>
<dbReference type="RefSeq" id="WP_010933297.1">
    <property type="nucleotide sequence ID" value="NC_002932.3"/>
</dbReference>
<dbReference type="SMR" id="Q8KBZ7"/>
<dbReference type="STRING" id="194439.CT1633"/>
<dbReference type="EnsemblBacteria" id="AAM72858">
    <property type="protein sequence ID" value="AAM72858"/>
    <property type="gene ID" value="CT1633"/>
</dbReference>
<dbReference type="KEGG" id="cte:CT1633"/>
<dbReference type="PATRIC" id="fig|194439.7.peg.1476"/>
<dbReference type="eggNOG" id="COG1493">
    <property type="taxonomic scope" value="Bacteria"/>
</dbReference>
<dbReference type="HOGENOM" id="CLU_052030_0_1_10"/>
<dbReference type="OrthoDB" id="9778803at2"/>
<dbReference type="Proteomes" id="UP000001007">
    <property type="component" value="Chromosome"/>
</dbReference>
<dbReference type="GO" id="GO:0005524">
    <property type="term" value="F:ATP binding"/>
    <property type="evidence" value="ECO:0007669"/>
    <property type="project" value="UniProtKB-UniRule"/>
</dbReference>
<dbReference type="GO" id="GO:0000287">
    <property type="term" value="F:magnesium ion binding"/>
    <property type="evidence" value="ECO:0007669"/>
    <property type="project" value="UniProtKB-UniRule"/>
</dbReference>
<dbReference type="GO" id="GO:0000155">
    <property type="term" value="F:phosphorelay sensor kinase activity"/>
    <property type="evidence" value="ECO:0007669"/>
    <property type="project" value="InterPro"/>
</dbReference>
<dbReference type="GO" id="GO:0004674">
    <property type="term" value="F:protein serine/threonine kinase activity"/>
    <property type="evidence" value="ECO:0007669"/>
    <property type="project" value="UniProtKB-KW"/>
</dbReference>
<dbReference type="GO" id="GO:0004712">
    <property type="term" value="F:protein serine/threonine/tyrosine kinase activity"/>
    <property type="evidence" value="ECO:0007669"/>
    <property type="project" value="UniProtKB-UniRule"/>
</dbReference>
<dbReference type="GO" id="GO:0006109">
    <property type="term" value="P:regulation of carbohydrate metabolic process"/>
    <property type="evidence" value="ECO:0007669"/>
    <property type="project" value="UniProtKB-UniRule"/>
</dbReference>
<dbReference type="CDD" id="cd01918">
    <property type="entry name" value="HprK_C"/>
    <property type="match status" value="1"/>
</dbReference>
<dbReference type="Gene3D" id="3.40.1390.20">
    <property type="entry name" value="HprK N-terminal domain-like"/>
    <property type="match status" value="1"/>
</dbReference>
<dbReference type="Gene3D" id="3.40.50.300">
    <property type="entry name" value="P-loop containing nucleotide triphosphate hydrolases"/>
    <property type="match status" value="1"/>
</dbReference>
<dbReference type="HAMAP" id="MF_01249">
    <property type="entry name" value="HPr_kinase"/>
    <property type="match status" value="1"/>
</dbReference>
<dbReference type="InterPro" id="IPR003755">
    <property type="entry name" value="HPr(Ser)_kin/Pase"/>
</dbReference>
<dbReference type="InterPro" id="IPR011104">
    <property type="entry name" value="Hpr_kin/Pase_C"/>
</dbReference>
<dbReference type="InterPro" id="IPR011126">
    <property type="entry name" value="Hpr_kin/Pase_Hpr_N"/>
</dbReference>
<dbReference type="InterPro" id="IPR027417">
    <property type="entry name" value="P-loop_NTPase"/>
</dbReference>
<dbReference type="InterPro" id="IPR028979">
    <property type="entry name" value="Ser_kin/Pase_Hpr-like_N_sf"/>
</dbReference>
<dbReference type="NCBIfam" id="TIGR00679">
    <property type="entry name" value="hpr-ser"/>
    <property type="match status" value="1"/>
</dbReference>
<dbReference type="PANTHER" id="PTHR30305:SF1">
    <property type="entry name" value="HPR KINASE_PHOSPHORYLASE"/>
    <property type="match status" value="1"/>
</dbReference>
<dbReference type="PANTHER" id="PTHR30305">
    <property type="entry name" value="PROTEIN YJDM-RELATED"/>
    <property type="match status" value="1"/>
</dbReference>
<dbReference type="Pfam" id="PF07475">
    <property type="entry name" value="Hpr_kinase_C"/>
    <property type="match status" value="1"/>
</dbReference>
<dbReference type="Pfam" id="PF02603">
    <property type="entry name" value="Hpr_kinase_N"/>
    <property type="match status" value="1"/>
</dbReference>
<dbReference type="SUPFAM" id="SSF75138">
    <property type="entry name" value="HprK N-terminal domain-like"/>
    <property type="match status" value="1"/>
</dbReference>
<dbReference type="SUPFAM" id="SSF53795">
    <property type="entry name" value="PEP carboxykinase-like"/>
    <property type="match status" value="1"/>
</dbReference>
<reference key="1">
    <citation type="journal article" date="2002" name="Proc. Natl. Acad. Sci. U.S.A.">
        <title>The complete genome sequence of Chlorobium tepidum TLS, a photosynthetic, anaerobic, green-sulfur bacterium.</title>
        <authorList>
            <person name="Eisen J.A."/>
            <person name="Nelson K.E."/>
            <person name="Paulsen I.T."/>
            <person name="Heidelberg J.F."/>
            <person name="Wu M."/>
            <person name="Dodson R.J."/>
            <person name="DeBoy R.T."/>
            <person name="Gwinn M.L."/>
            <person name="Nelson W.C."/>
            <person name="Haft D.H."/>
            <person name="Hickey E.K."/>
            <person name="Peterson J.D."/>
            <person name="Durkin A.S."/>
            <person name="Kolonay J.F."/>
            <person name="Yang F."/>
            <person name="Holt I.E."/>
            <person name="Umayam L.A."/>
            <person name="Mason T.M."/>
            <person name="Brenner M."/>
            <person name="Shea T.P."/>
            <person name="Parksey D.S."/>
            <person name="Nierman W.C."/>
            <person name="Feldblyum T.V."/>
            <person name="Hansen C.L."/>
            <person name="Craven M.B."/>
            <person name="Radune D."/>
            <person name="Vamathevan J.J."/>
            <person name="Khouri H.M."/>
            <person name="White O."/>
            <person name="Gruber T.M."/>
            <person name="Ketchum K.A."/>
            <person name="Venter J.C."/>
            <person name="Tettelin H."/>
            <person name="Bryant D.A."/>
            <person name="Fraser C.M."/>
        </authorList>
    </citation>
    <scope>NUCLEOTIDE SEQUENCE [LARGE SCALE GENOMIC DNA]</scope>
    <source>
        <strain>ATCC 49652 / DSM 12025 / NBRC 103806 / TLS</strain>
    </source>
</reference>
<feature type="chain" id="PRO_0000058950" description="HPr kinase/phosphorylase">
    <location>
        <begin position="1"/>
        <end position="342"/>
    </location>
</feature>
<feature type="region of interest" description="Important for the catalytic mechanism of both phosphorylation and dephosphorylation" evidence="1">
    <location>
        <begin position="217"/>
        <end position="226"/>
    </location>
</feature>
<feature type="region of interest" description="Important for the catalytic mechanism of dephosphorylation" evidence="1">
    <location>
        <begin position="280"/>
        <end position="285"/>
    </location>
</feature>
<feature type="active site" evidence="1">
    <location>
        <position position="153"/>
    </location>
</feature>
<feature type="active site" evidence="1">
    <location>
        <position position="174"/>
    </location>
</feature>
<feature type="active site" description="Proton acceptor; for phosphorylation activity. Proton donor; for dephosphorylation activity" evidence="1">
    <location>
        <position position="192"/>
    </location>
</feature>
<feature type="active site" evidence="1">
    <location>
        <position position="259"/>
    </location>
</feature>
<feature type="binding site" evidence="1">
    <location>
        <begin position="168"/>
        <end position="175"/>
    </location>
    <ligand>
        <name>ATP</name>
        <dbReference type="ChEBI" id="CHEBI:30616"/>
    </ligand>
</feature>
<feature type="binding site" evidence="1">
    <location>
        <position position="175"/>
    </location>
    <ligand>
        <name>Mg(2+)</name>
        <dbReference type="ChEBI" id="CHEBI:18420"/>
    </ligand>
</feature>
<feature type="binding site" evidence="1">
    <location>
        <position position="218"/>
    </location>
    <ligand>
        <name>Mg(2+)</name>
        <dbReference type="ChEBI" id="CHEBI:18420"/>
    </ligand>
</feature>